<protein>
    <recommendedName>
        <fullName evidence="1">Imidazolonepropionase</fullName>
        <ecNumber evidence="1">3.5.2.7</ecNumber>
    </recommendedName>
    <alternativeName>
        <fullName evidence="1">Imidazolone-5-propionate hydrolase</fullName>
    </alternativeName>
</protein>
<sequence>MQRIENINAATMTDDKGYGLIQDATVIINKGKIEFVGAAFDAPATPTAEVIDGNGGLLTPGLIDCHTHLVWAGSRANEFAQRLHGASYQEIAEQGGGIKSTVKATREASAEELLTLALERAETLMSQGVTTIEVKSGYGLDLENERKQLTVARQLAEQLPVNIKTTLLAAHAVPPEFKDNADGYIEEIIQNILPTLANEGLVDAVDAFCESIGFSPAQTEKVFKTAKDLELPIKLHAEQITNQKGAKLAADYQALSADHLEQLDEEGVKAMAENGTVAVLLPGAFYFLRDTQKPPVELLRKHGVPMAIATDANPGSSPIHNLPLMLQMAATFFHMTPEECLRGVTVNAAKALGENQRGVIAEGCYADLALWSCKDAAELTYQFGVNPLKTLWFNGVAHDRVSKPWSAR</sequence>
<keyword id="KW-0963">Cytoplasm</keyword>
<keyword id="KW-0369">Histidine metabolism</keyword>
<keyword id="KW-0378">Hydrolase</keyword>
<keyword id="KW-0408">Iron</keyword>
<keyword id="KW-0479">Metal-binding</keyword>
<keyword id="KW-1185">Reference proteome</keyword>
<keyword id="KW-0862">Zinc</keyword>
<dbReference type="EC" id="3.5.2.7" evidence="1"/>
<dbReference type="EMBL" id="AE017340">
    <property type="protein sequence ID" value="AAV83285.1"/>
    <property type="molecule type" value="Genomic_DNA"/>
</dbReference>
<dbReference type="RefSeq" id="WP_011235678.1">
    <property type="nucleotide sequence ID" value="NC_006512.1"/>
</dbReference>
<dbReference type="SMR" id="Q5QV40"/>
<dbReference type="STRING" id="283942.IL2453"/>
<dbReference type="GeneID" id="41337647"/>
<dbReference type="KEGG" id="ilo:IL2453"/>
<dbReference type="eggNOG" id="COG1228">
    <property type="taxonomic scope" value="Bacteria"/>
</dbReference>
<dbReference type="HOGENOM" id="CLU_041647_0_0_6"/>
<dbReference type="OrthoDB" id="9776455at2"/>
<dbReference type="UniPathway" id="UPA00379">
    <property type="reaction ID" value="UER00551"/>
</dbReference>
<dbReference type="Proteomes" id="UP000001171">
    <property type="component" value="Chromosome"/>
</dbReference>
<dbReference type="GO" id="GO:0005737">
    <property type="term" value="C:cytoplasm"/>
    <property type="evidence" value="ECO:0007669"/>
    <property type="project" value="UniProtKB-SubCell"/>
</dbReference>
<dbReference type="GO" id="GO:0050480">
    <property type="term" value="F:imidazolonepropionase activity"/>
    <property type="evidence" value="ECO:0007669"/>
    <property type="project" value="UniProtKB-UniRule"/>
</dbReference>
<dbReference type="GO" id="GO:0005506">
    <property type="term" value="F:iron ion binding"/>
    <property type="evidence" value="ECO:0007669"/>
    <property type="project" value="UniProtKB-UniRule"/>
</dbReference>
<dbReference type="GO" id="GO:0008270">
    <property type="term" value="F:zinc ion binding"/>
    <property type="evidence" value="ECO:0007669"/>
    <property type="project" value="UniProtKB-UniRule"/>
</dbReference>
<dbReference type="GO" id="GO:0019556">
    <property type="term" value="P:L-histidine catabolic process to glutamate and formamide"/>
    <property type="evidence" value="ECO:0007669"/>
    <property type="project" value="UniProtKB-UniPathway"/>
</dbReference>
<dbReference type="GO" id="GO:0019557">
    <property type="term" value="P:L-histidine catabolic process to glutamate and formate"/>
    <property type="evidence" value="ECO:0007669"/>
    <property type="project" value="UniProtKB-UniPathway"/>
</dbReference>
<dbReference type="CDD" id="cd01296">
    <property type="entry name" value="Imidazolone-5PH"/>
    <property type="match status" value="1"/>
</dbReference>
<dbReference type="FunFam" id="3.20.20.140:FF:000007">
    <property type="entry name" value="Imidazolonepropionase"/>
    <property type="match status" value="1"/>
</dbReference>
<dbReference type="Gene3D" id="3.20.20.140">
    <property type="entry name" value="Metal-dependent hydrolases"/>
    <property type="match status" value="1"/>
</dbReference>
<dbReference type="Gene3D" id="2.30.40.10">
    <property type="entry name" value="Urease, subunit C, domain 1"/>
    <property type="match status" value="1"/>
</dbReference>
<dbReference type="HAMAP" id="MF_00372">
    <property type="entry name" value="HutI"/>
    <property type="match status" value="1"/>
</dbReference>
<dbReference type="InterPro" id="IPR006680">
    <property type="entry name" value="Amidohydro-rel"/>
</dbReference>
<dbReference type="InterPro" id="IPR005920">
    <property type="entry name" value="HutI"/>
</dbReference>
<dbReference type="InterPro" id="IPR011059">
    <property type="entry name" value="Metal-dep_hydrolase_composite"/>
</dbReference>
<dbReference type="InterPro" id="IPR032466">
    <property type="entry name" value="Metal_Hydrolase"/>
</dbReference>
<dbReference type="NCBIfam" id="TIGR01224">
    <property type="entry name" value="hutI"/>
    <property type="match status" value="1"/>
</dbReference>
<dbReference type="PANTHER" id="PTHR42752">
    <property type="entry name" value="IMIDAZOLONEPROPIONASE"/>
    <property type="match status" value="1"/>
</dbReference>
<dbReference type="PANTHER" id="PTHR42752:SF1">
    <property type="entry name" value="IMIDAZOLONEPROPIONASE-RELATED"/>
    <property type="match status" value="1"/>
</dbReference>
<dbReference type="Pfam" id="PF01979">
    <property type="entry name" value="Amidohydro_1"/>
    <property type="match status" value="1"/>
</dbReference>
<dbReference type="SUPFAM" id="SSF51338">
    <property type="entry name" value="Composite domain of metallo-dependent hydrolases"/>
    <property type="match status" value="1"/>
</dbReference>
<dbReference type="SUPFAM" id="SSF51556">
    <property type="entry name" value="Metallo-dependent hydrolases"/>
    <property type="match status" value="1"/>
</dbReference>
<organism>
    <name type="scientific">Idiomarina loihiensis (strain ATCC BAA-735 / DSM 15497 / L2-TR)</name>
    <dbReference type="NCBI Taxonomy" id="283942"/>
    <lineage>
        <taxon>Bacteria</taxon>
        <taxon>Pseudomonadati</taxon>
        <taxon>Pseudomonadota</taxon>
        <taxon>Gammaproteobacteria</taxon>
        <taxon>Alteromonadales</taxon>
        <taxon>Idiomarinaceae</taxon>
        <taxon>Idiomarina</taxon>
    </lineage>
</organism>
<name>HUTI_IDILO</name>
<proteinExistence type="inferred from homology"/>
<feature type="chain" id="PRO_0000306467" description="Imidazolonepropionase">
    <location>
        <begin position="1"/>
        <end position="408"/>
    </location>
</feature>
<feature type="binding site" evidence="1">
    <location>
        <position position="66"/>
    </location>
    <ligand>
        <name>Fe(3+)</name>
        <dbReference type="ChEBI" id="CHEBI:29034"/>
    </ligand>
</feature>
<feature type="binding site" evidence="1">
    <location>
        <position position="66"/>
    </location>
    <ligand>
        <name>Zn(2+)</name>
        <dbReference type="ChEBI" id="CHEBI:29105"/>
    </ligand>
</feature>
<feature type="binding site" evidence="1">
    <location>
        <position position="68"/>
    </location>
    <ligand>
        <name>Fe(3+)</name>
        <dbReference type="ChEBI" id="CHEBI:29034"/>
    </ligand>
</feature>
<feature type="binding site" evidence="1">
    <location>
        <position position="68"/>
    </location>
    <ligand>
        <name>Zn(2+)</name>
        <dbReference type="ChEBI" id="CHEBI:29105"/>
    </ligand>
</feature>
<feature type="binding site" evidence="1">
    <location>
        <position position="75"/>
    </location>
    <ligand>
        <name>4-imidazolone-5-propanoate</name>
        <dbReference type="ChEBI" id="CHEBI:77893"/>
    </ligand>
</feature>
<feature type="binding site" evidence="1">
    <location>
        <position position="138"/>
    </location>
    <ligand>
        <name>4-imidazolone-5-propanoate</name>
        <dbReference type="ChEBI" id="CHEBI:77893"/>
    </ligand>
</feature>
<feature type="binding site" evidence="1">
    <location>
        <position position="138"/>
    </location>
    <ligand>
        <name>N-formimidoyl-L-glutamate</name>
        <dbReference type="ChEBI" id="CHEBI:58928"/>
    </ligand>
</feature>
<feature type="binding site" evidence="1">
    <location>
        <position position="171"/>
    </location>
    <ligand>
        <name>4-imidazolone-5-propanoate</name>
        <dbReference type="ChEBI" id="CHEBI:77893"/>
    </ligand>
</feature>
<feature type="binding site" evidence="1">
    <location>
        <position position="236"/>
    </location>
    <ligand>
        <name>Fe(3+)</name>
        <dbReference type="ChEBI" id="CHEBI:29034"/>
    </ligand>
</feature>
<feature type="binding site" evidence="1">
    <location>
        <position position="236"/>
    </location>
    <ligand>
        <name>Zn(2+)</name>
        <dbReference type="ChEBI" id="CHEBI:29105"/>
    </ligand>
</feature>
<feature type="binding site" evidence="1">
    <location>
        <position position="239"/>
    </location>
    <ligand>
        <name>4-imidazolone-5-propanoate</name>
        <dbReference type="ChEBI" id="CHEBI:77893"/>
    </ligand>
</feature>
<feature type="binding site" evidence="1">
    <location>
        <position position="311"/>
    </location>
    <ligand>
        <name>Fe(3+)</name>
        <dbReference type="ChEBI" id="CHEBI:29034"/>
    </ligand>
</feature>
<feature type="binding site" evidence="1">
    <location>
        <position position="311"/>
    </location>
    <ligand>
        <name>Zn(2+)</name>
        <dbReference type="ChEBI" id="CHEBI:29105"/>
    </ligand>
</feature>
<feature type="binding site" evidence="1">
    <location>
        <position position="313"/>
    </location>
    <ligand>
        <name>N-formimidoyl-L-glutamate</name>
        <dbReference type="ChEBI" id="CHEBI:58928"/>
    </ligand>
</feature>
<feature type="binding site" evidence="1">
    <location>
        <position position="315"/>
    </location>
    <ligand>
        <name>N-formimidoyl-L-glutamate</name>
        <dbReference type="ChEBI" id="CHEBI:58928"/>
    </ligand>
</feature>
<feature type="binding site" evidence="1">
    <location>
        <position position="316"/>
    </location>
    <ligand>
        <name>4-imidazolone-5-propanoate</name>
        <dbReference type="ChEBI" id="CHEBI:77893"/>
    </ligand>
</feature>
<accession>Q5QV40</accession>
<comment type="function">
    <text evidence="1">Catalyzes the hydrolytic cleavage of the carbon-nitrogen bond in imidazolone-5-propanoate to yield N-formimidoyl-L-glutamate. It is the third step in the universal histidine degradation pathway.</text>
</comment>
<comment type="catalytic activity">
    <reaction evidence="1">
        <text>4-imidazolone-5-propanoate + H2O = N-formimidoyl-L-glutamate</text>
        <dbReference type="Rhea" id="RHEA:23660"/>
        <dbReference type="ChEBI" id="CHEBI:15377"/>
        <dbReference type="ChEBI" id="CHEBI:58928"/>
        <dbReference type="ChEBI" id="CHEBI:77893"/>
        <dbReference type="EC" id="3.5.2.7"/>
    </reaction>
</comment>
<comment type="cofactor">
    <cofactor evidence="1">
        <name>Zn(2+)</name>
        <dbReference type="ChEBI" id="CHEBI:29105"/>
    </cofactor>
    <cofactor evidence="1">
        <name>Fe(3+)</name>
        <dbReference type="ChEBI" id="CHEBI:29034"/>
    </cofactor>
    <text evidence="1">Binds 1 zinc or iron ion per subunit.</text>
</comment>
<comment type="pathway">
    <text evidence="1">Amino-acid degradation; L-histidine degradation into L-glutamate; N-formimidoyl-L-glutamate from L-histidine: step 3/3.</text>
</comment>
<comment type="subcellular location">
    <subcellularLocation>
        <location evidence="1">Cytoplasm</location>
    </subcellularLocation>
</comment>
<comment type="similarity">
    <text evidence="1">Belongs to the metallo-dependent hydrolases superfamily. HutI family.</text>
</comment>
<reference key="1">
    <citation type="journal article" date="2004" name="Proc. Natl. Acad. Sci. U.S.A.">
        <title>Genome sequence of the deep-sea gamma-proteobacterium Idiomarina loihiensis reveals amino acid fermentation as a source of carbon and energy.</title>
        <authorList>
            <person name="Hou S."/>
            <person name="Saw J.H."/>
            <person name="Lee K.S."/>
            <person name="Freitas T.A."/>
            <person name="Belisle C."/>
            <person name="Kawarabayasi Y."/>
            <person name="Donachie S.P."/>
            <person name="Pikina A."/>
            <person name="Galperin M.Y."/>
            <person name="Koonin E.V."/>
            <person name="Makarova K.S."/>
            <person name="Omelchenko M.V."/>
            <person name="Sorokin A."/>
            <person name="Wolf Y.I."/>
            <person name="Li Q.X."/>
            <person name="Keum Y.S."/>
            <person name="Campbell S."/>
            <person name="Denery J."/>
            <person name="Aizawa S."/>
            <person name="Shibata S."/>
            <person name="Malahoff A."/>
            <person name="Alam M."/>
        </authorList>
    </citation>
    <scope>NUCLEOTIDE SEQUENCE [LARGE SCALE GENOMIC DNA]</scope>
    <source>
        <strain>ATCC BAA-735 / DSM 15497 / L2-TR</strain>
    </source>
</reference>
<gene>
    <name evidence="1" type="primary">hutI</name>
    <name type="ordered locus">IL2453</name>
</gene>
<evidence type="ECO:0000255" key="1">
    <source>
        <dbReference type="HAMAP-Rule" id="MF_00372"/>
    </source>
</evidence>